<proteinExistence type="inferred from homology"/>
<dbReference type="EMBL" id="CP001472">
    <property type="protein sequence ID" value="ACO33605.1"/>
    <property type="molecule type" value="Genomic_DNA"/>
</dbReference>
<dbReference type="RefSeq" id="WP_015896581.1">
    <property type="nucleotide sequence ID" value="NC_012483.1"/>
</dbReference>
<dbReference type="SMR" id="C1F639"/>
<dbReference type="FunCoup" id="C1F639">
    <property type="interactions" value="689"/>
</dbReference>
<dbReference type="STRING" id="240015.ACP_1448"/>
<dbReference type="KEGG" id="aca:ACP_1448"/>
<dbReference type="eggNOG" id="COG0090">
    <property type="taxonomic scope" value="Bacteria"/>
</dbReference>
<dbReference type="HOGENOM" id="CLU_036235_2_1_0"/>
<dbReference type="InParanoid" id="C1F639"/>
<dbReference type="OrthoDB" id="9778722at2"/>
<dbReference type="Proteomes" id="UP000002207">
    <property type="component" value="Chromosome"/>
</dbReference>
<dbReference type="GO" id="GO:0015934">
    <property type="term" value="C:large ribosomal subunit"/>
    <property type="evidence" value="ECO:0007669"/>
    <property type="project" value="InterPro"/>
</dbReference>
<dbReference type="GO" id="GO:0019843">
    <property type="term" value="F:rRNA binding"/>
    <property type="evidence" value="ECO:0007669"/>
    <property type="project" value="UniProtKB-UniRule"/>
</dbReference>
<dbReference type="GO" id="GO:0003735">
    <property type="term" value="F:structural constituent of ribosome"/>
    <property type="evidence" value="ECO:0007669"/>
    <property type="project" value="InterPro"/>
</dbReference>
<dbReference type="GO" id="GO:0016740">
    <property type="term" value="F:transferase activity"/>
    <property type="evidence" value="ECO:0007669"/>
    <property type="project" value="InterPro"/>
</dbReference>
<dbReference type="GO" id="GO:0002181">
    <property type="term" value="P:cytoplasmic translation"/>
    <property type="evidence" value="ECO:0007669"/>
    <property type="project" value="TreeGrafter"/>
</dbReference>
<dbReference type="FunFam" id="2.30.30.30:FF:000001">
    <property type="entry name" value="50S ribosomal protein L2"/>
    <property type="match status" value="1"/>
</dbReference>
<dbReference type="FunFam" id="2.40.50.140:FF:000003">
    <property type="entry name" value="50S ribosomal protein L2"/>
    <property type="match status" value="1"/>
</dbReference>
<dbReference type="FunFam" id="4.10.950.10:FF:000001">
    <property type="entry name" value="50S ribosomal protein L2"/>
    <property type="match status" value="1"/>
</dbReference>
<dbReference type="Gene3D" id="2.30.30.30">
    <property type="match status" value="1"/>
</dbReference>
<dbReference type="Gene3D" id="2.40.50.140">
    <property type="entry name" value="Nucleic acid-binding proteins"/>
    <property type="match status" value="1"/>
</dbReference>
<dbReference type="Gene3D" id="4.10.950.10">
    <property type="entry name" value="Ribosomal protein L2, domain 3"/>
    <property type="match status" value="1"/>
</dbReference>
<dbReference type="HAMAP" id="MF_01320_B">
    <property type="entry name" value="Ribosomal_uL2_B"/>
    <property type="match status" value="1"/>
</dbReference>
<dbReference type="InterPro" id="IPR012340">
    <property type="entry name" value="NA-bd_OB-fold"/>
</dbReference>
<dbReference type="InterPro" id="IPR014722">
    <property type="entry name" value="Rib_uL2_dom2"/>
</dbReference>
<dbReference type="InterPro" id="IPR002171">
    <property type="entry name" value="Ribosomal_uL2"/>
</dbReference>
<dbReference type="InterPro" id="IPR005880">
    <property type="entry name" value="Ribosomal_uL2_bac/org-type"/>
</dbReference>
<dbReference type="InterPro" id="IPR022669">
    <property type="entry name" value="Ribosomal_uL2_C"/>
</dbReference>
<dbReference type="InterPro" id="IPR022671">
    <property type="entry name" value="Ribosomal_uL2_CS"/>
</dbReference>
<dbReference type="InterPro" id="IPR014726">
    <property type="entry name" value="Ribosomal_uL2_dom3"/>
</dbReference>
<dbReference type="InterPro" id="IPR022666">
    <property type="entry name" value="Ribosomal_uL2_RNA-bd_dom"/>
</dbReference>
<dbReference type="InterPro" id="IPR008991">
    <property type="entry name" value="Translation_prot_SH3-like_sf"/>
</dbReference>
<dbReference type="NCBIfam" id="TIGR01171">
    <property type="entry name" value="rplB_bact"/>
    <property type="match status" value="1"/>
</dbReference>
<dbReference type="PANTHER" id="PTHR13691:SF5">
    <property type="entry name" value="LARGE RIBOSOMAL SUBUNIT PROTEIN UL2M"/>
    <property type="match status" value="1"/>
</dbReference>
<dbReference type="PANTHER" id="PTHR13691">
    <property type="entry name" value="RIBOSOMAL PROTEIN L2"/>
    <property type="match status" value="1"/>
</dbReference>
<dbReference type="Pfam" id="PF00181">
    <property type="entry name" value="Ribosomal_L2"/>
    <property type="match status" value="1"/>
</dbReference>
<dbReference type="Pfam" id="PF03947">
    <property type="entry name" value="Ribosomal_L2_C"/>
    <property type="match status" value="1"/>
</dbReference>
<dbReference type="PIRSF" id="PIRSF002158">
    <property type="entry name" value="Ribosomal_L2"/>
    <property type="match status" value="1"/>
</dbReference>
<dbReference type="SMART" id="SM01383">
    <property type="entry name" value="Ribosomal_L2"/>
    <property type="match status" value="1"/>
</dbReference>
<dbReference type="SMART" id="SM01382">
    <property type="entry name" value="Ribosomal_L2_C"/>
    <property type="match status" value="1"/>
</dbReference>
<dbReference type="SUPFAM" id="SSF50249">
    <property type="entry name" value="Nucleic acid-binding proteins"/>
    <property type="match status" value="1"/>
</dbReference>
<dbReference type="SUPFAM" id="SSF50104">
    <property type="entry name" value="Translation proteins SH3-like domain"/>
    <property type="match status" value="1"/>
</dbReference>
<dbReference type="PROSITE" id="PS00467">
    <property type="entry name" value="RIBOSOMAL_L2"/>
    <property type="match status" value="1"/>
</dbReference>
<comment type="function">
    <text evidence="1">One of the primary rRNA binding proteins. Required for association of the 30S and 50S subunits to form the 70S ribosome, for tRNA binding and peptide bond formation. It has been suggested to have peptidyltransferase activity; this is somewhat controversial. Makes several contacts with the 16S rRNA in the 70S ribosome.</text>
</comment>
<comment type="subunit">
    <text evidence="1">Part of the 50S ribosomal subunit. Forms a bridge to the 30S subunit in the 70S ribosome.</text>
</comment>
<comment type="similarity">
    <text evidence="1">Belongs to the universal ribosomal protein uL2 family.</text>
</comment>
<keyword id="KW-1185">Reference proteome</keyword>
<keyword id="KW-0687">Ribonucleoprotein</keyword>
<keyword id="KW-0689">Ribosomal protein</keyword>
<keyword id="KW-0694">RNA-binding</keyword>
<keyword id="KW-0699">rRNA-binding</keyword>
<feature type="chain" id="PRO_1000165712" description="Large ribosomal subunit protein uL2">
    <location>
        <begin position="1"/>
        <end position="275"/>
    </location>
</feature>
<feature type="region of interest" description="Disordered" evidence="2">
    <location>
        <begin position="212"/>
        <end position="259"/>
    </location>
</feature>
<gene>
    <name evidence="1" type="primary">rplB</name>
    <name type="ordered locus">ACP_1448</name>
</gene>
<organism>
    <name type="scientific">Acidobacterium capsulatum (strain ATCC 51196 / DSM 11244 / BCRC 80197 / JCM 7670 / NBRC 15755 / NCIMB 13165 / 161)</name>
    <dbReference type="NCBI Taxonomy" id="240015"/>
    <lineage>
        <taxon>Bacteria</taxon>
        <taxon>Pseudomonadati</taxon>
        <taxon>Acidobacteriota</taxon>
        <taxon>Terriglobia</taxon>
        <taxon>Terriglobales</taxon>
        <taxon>Acidobacteriaceae</taxon>
        <taxon>Acidobacterium</taxon>
    </lineage>
</organism>
<sequence length="275" mass="30074">MPIKTFRPITPTLRFQTALVNDDITTDKPHKPLLVTKLRTGGRRNSGDLTIRHHGGGHKKKLRLIDFKRDKFGVPGRVATIEYDPNRSSRIALISYADGEKRYILQPVGLKVGQTIMSGPEADILVGNALPLKNIPAGTTVHNVELRPGKGAQMVRSAGASAQLVAKEGDYALLKLPSGETRRVLINCMATIGQVGNTDHENVSIGKAGRNRWKGIRPTNRGVTMNPVDHPHGGGEGKTSGGRHPVTPWGQPTRGYKTRNNKRTDTFIVNRRGKK</sequence>
<accession>C1F639</accession>
<protein>
    <recommendedName>
        <fullName evidence="1">Large ribosomal subunit protein uL2</fullName>
    </recommendedName>
    <alternativeName>
        <fullName evidence="3">50S ribosomal protein L2</fullName>
    </alternativeName>
</protein>
<evidence type="ECO:0000255" key="1">
    <source>
        <dbReference type="HAMAP-Rule" id="MF_01320"/>
    </source>
</evidence>
<evidence type="ECO:0000256" key="2">
    <source>
        <dbReference type="SAM" id="MobiDB-lite"/>
    </source>
</evidence>
<evidence type="ECO:0000305" key="3"/>
<name>RL2_ACIC5</name>
<reference key="1">
    <citation type="journal article" date="2009" name="Appl. Environ. Microbiol.">
        <title>Three genomes from the phylum Acidobacteria provide insight into the lifestyles of these microorganisms in soils.</title>
        <authorList>
            <person name="Ward N.L."/>
            <person name="Challacombe J.F."/>
            <person name="Janssen P.H."/>
            <person name="Henrissat B."/>
            <person name="Coutinho P.M."/>
            <person name="Wu M."/>
            <person name="Xie G."/>
            <person name="Haft D.H."/>
            <person name="Sait M."/>
            <person name="Badger J."/>
            <person name="Barabote R.D."/>
            <person name="Bradley B."/>
            <person name="Brettin T.S."/>
            <person name="Brinkac L.M."/>
            <person name="Bruce D."/>
            <person name="Creasy T."/>
            <person name="Daugherty S.C."/>
            <person name="Davidsen T.M."/>
            <person name="DeBoy R.T."/>
            <person name="Detter J.C."/>
            <person name="Dodson R.J."/>
            <person name="Durkin A.S."/>
            <person name="Ganapathy A."/>
            <person name="Gwinn-Giglio M."/>
            <person name="Han C.S."/>
            <person name="Khouri H."/>
            <person name="Kiss H."/>
            <person name="Kothari S.P."/>
            <person name="Madupu R."/>
            <person name="Nelson K.E."/>
            <person name="Nelson W.C."/>
            <person name="Paulsen I."/>
            <person name="Penn K."/>
            <person name="Ren Q."/>
            <person name="Rosovitz M.J."/>
            <person name="Selengut J.D."/>
            <person name="Shrivastava S."/>
            <person name="Sullivan S.A."/>
            <person name="Tapia R."/>
            <person name="Thompson L.S."/>
            <person name="Watkins K.L."/>
            <person name="Yang Q."/>
            <person name="Yu C."/>
            <person name="Zafar N."/>
            <person name="Zhou L."/>
            <person name="Kuske C.R."/>
        </authorList>
    </citation>
    <scope>NUCLEOTIDE SEQUENCE [LARGE SCALE GENOMIC DNA]</scope>
    <source>
        <strain>ATCC 51196 / DSM 11244 / BCRC 80197 / JCM 7670 / NBRC 15755 / NCIMB 13165 / 161</strain>
    </source>
</reference>